<organism>
    <name type="scientific">Mycobacterium tuberculosis (strain ATCC 25618 / H37Rv)</name>
    <dbReference type="NCBI Taxonomy" id="83332"/>
    <lineage>
        <taxon>Bacteria</taxon>
        <taxon>Bacillati</taxon>
        <taxon>Actinomycetota</taxon>
        <taxon>Actinomycetes</taxon>
        <taxon>Mycobacteriales</taxon>
        <taxon>Mycobacteriaceae</taxon>
        <taxon>Mycobacterium</taxon>
        <taxon>Mycobacterium tuberculosis complex</taxon>
    </lineage>
</organism>
<dbReference type="EMBL" id="AL123456">
    <property type="protein sequence ID" value="CCP44725.1"/>
    <property type="molecule type" value="Genomic_DNA"/>
</dbReference>
<dbReference type="PIR" id="A70639">
    <property type="entry name" value="A70639"/>
</dbReference>
<dbReference type="RefSeq" id="NP_216473.1">
    <property type="nucleotide sequence ID" value="NC_000962.3"/>
</dbReference>
<dbReference type="RefSeq" id="WP_003409891.1">
    <property type="nucleotide sequence ID" value="NZ_NVQJ01000048.1"/>
</dbReference>
<dbReference type="PDB" id="5MTW">
    <property type="method" value="X-ray"/>
    <property type="resolution" value="1.84 A"/>
    <property type="chains" value="A/B/C/D=1-181"/>
</dbReference>
<dbReference type="PDBsum" id="5MTW"/>
<dbReference type="SMR" id="P95257"/>
<dbReference type="STRING" id="83332.Rv1957"/>
<dbReference type="iPTMnet" id="P95257"/>
<dbReference type="PaxDb" id="83332-Rv1957"/>
<dbReference type="DNASU" id="885961"/>
<dbReference type="GeneID" id="885961"/>
<dbReference type="KEGG" id="mtu:Rv1957"/>
<dbReference type="KEGG" id="mtv:RVBD_1957"/>
<dbReference type="TubercuList" id="Rv1957"/>
<dbReference type="eggNOG" id="ENOG50339MZ">
    <property type="taxonomic scope" value="Bacteria"/>
</dbReference>
<dbReference type="InParanoid" id="P95257"/>
<dbReference type="OrthoDB" id="5197361at2"/>
<dbReference type="Proteomes" id="UP000001584">
    <property type="component" value="Chromosome"/>
</dbReference>
<dbReference type="GO" id="GO:0009274">
    <property type="term" value="C:peptidoglycan-based cell wall"/>
    <property type="evidence" value="ECO:0007005"/>
    <property type="project" value="MTBBASE"/>
</dbReference>
<dbReference type="Gene3D" id="3.10.420.10">
    <property type="entry name" value="SecB-like"/>
    <property type="match status" value="1"/>
</dbReference>
<dbReference type="InterPro" id="IPR035958">
    <property type="entry name" value="SecB-like_sf"/>
</dbReference>
<dbReference type="SUPFAM" id="SSF54611">
    <property type="entry name" value="SecB-like"/>
    <property type="match status" value="1"/>
</dbReference>
<reference key="1">
    <citation type="journal article" date="1998" name="Nature">
        <title>Deciphering the biology of Mycobacterium tuberculosis from the complete genome sequence.</title>
        <authorList>
            <person name="Cole S.T."/>
            <person name="Brosch R."/>
            <person name="Parkhill J."/>
            <person name="Garnier T."/>
            <person name="Churcher C.M."/>
            <person name="Harris D.E."/>
            <person name="Gordon S.V."/>
            <person name="Eiglmeier K."/>
            <person name="Gas S."/>
            <person name="Barry C.E. III"/>
            <person name="Tekaia F."/>
            <person name="Badcock K."/>
            <person name="Basham D."/>
            <person name="Brown D."/>
            <person name="Chillingworth T."/>
            <person name="Connor R."/>
            <person name="Davies R.M."/>
            <person name="Devlin K."/>
            <person name="Feltwell T."/>
            <person name="Gentles S."/>
            <person name="Hamlin N."/>
            <person name="Holroyd S."/>
            <person name="Hornsby T."/>
            <person name="Jagels K."/>
            <person name="Krogh A."/>
            <person name="McLean J."/>
            <person name="Moule S."/>
            <person name="Murphy L.D."/>
            <person name="Oliver S."/>
            <person name="Osborne J."/>
            <person name="Quail M.A."/>
            <person name="Rajandream M.A."/>
            <person name="Rogers J."/>
            <person name="Rutter S."/>
            <person name="Seeger K."/>
            <person name="Skelton S."/>
            <person name="Squares S."/>
            <person name="Squares R."/>
            <person name="Sulston J.E."/>
            <person name="Taylor K."/>
            <person name="Whitehead S."/>
            <person name="Barrell B.G."/>
        </authorList>
    </citation>
    <scope>NUCLEOTIDE SEQUENCE [LARGE SCALE GENOMIC DNA]</scope>
    <source>
        <strain>ATCC 25618 / H37Rv</strain>
    </source>
</reference>
<reference key="2">
    <citation type="journal article" date="2009" name="Microbiology">
        <title>Experimental determination of translational start sites resolves uncertainties in genomic open reading frame predictions - application to Mycobacterium tuberculosis.</title>
        <authorList>
            <person name="Smollett K.L."/>
            <person name="Fivian-Hughes A.S."/>
            <person name="Smith J.E."/>
            <person name="Chang A."/>
            <person name="Rao T."/>
            <person name="Davis E.O."/>
        </authorList>
    </citation>
    <scope>INDUCTION</scope>
    <scope>DISRUPTION PHENOTYPE</scope>
    <scope>OPERON STRUCTURE</scope>
    <source>
        <strain>ATCC 25618 / H37Rv</strain>
    </source>
</reference>
<reference key="3">
    <citation type="journal article" date="2003" name="Mol. Microbiol.">
        <title>Genes required for mycobacterial growth defined by high density mutagenesis.</title>
        <authorList>
            <person name="Sassetti C.M."/>
            <person name="Boyd D.H."/>
            <person name="Rubin E.J."/>
        </authorList>
    </citation>
    <scope>DISRUPTION PHENOTYPE</scope>
    <source>
        <strain>ATCC 25618 / H37Rv</strain>
    </source>
</reference>
<reference key="4">
    <citation type="journal article" date="2010" name="J. Bacteriol.">
        <title>Analyzing the regulatory role of the HigA antitoxin within Mycobacterium tuberculosis.</title>
        <authorList>
            <person name="Fivian-Hughes A.S."/>
            <person name="Davis E.O."/>
        </authorList>
    </citation>
    <scope>INDUCTION</scope>
    <source>
        <strain>ATCC 25618 / H37Rv</strain>
    </source>
</reference>
<reference key="5">
    <citation type="journal article" date="2011" name="Mol. Cell. Proteomics">
        <title>Proteogenomic analysis of Mycobacterium tuberculosis by high resolution mass spectrometry.</title>
        <authorList>
            <person name="Kelkar D.S."/>
            <person name="Kumar D."/>
            <person name="Kumar P."/>
            <person name="Balakrishnan L."/>
            <person name="Muthusamy B."/>
            <person name="Yadav A.K."/>
            <person name="Shrivastava P."/>
            <person name="Marimuthu A."/>
            <person name="Anand S."/>
            <person name="Sundaram H."/>
            <person name="Kingsbury R."/>
            <person name="Harsha H.C."/>
            <person name="Nair B."/>
            <person name="Prasad T.S."/>
            <person name="Chauhan D.S."/>
            <person name="Katoch K."/>
            <person name="Katoch V.M."/>
            <person name="Kumar P."/>
            <person name="Chaerkady R."/>
            <person name="Ramachandran S."/>
            <person name="Dash D."/>
            <person name="Pandey A."/>
        </authorList>
    </citation>
    <scope>ACETYLATION [LARGE SCALE ANALYSIS] AT THR-2</scope>
    <scope>CLEAVAGE OF INITIATOR METHIONINE [LARGE SCALE ANALYSIS]</scope>
    <scope>IDENTIFICATION BY MASS SPECTROMETRY [LARGE SCALE ANALYSIS]</scope>
    <source>
        <strain>ATCC 25618 / H37Rv</strain>
    </source>
</reference>
<reference key="6">
    <citation type="journal article" date="2011" name="Proc. Natl. Acad. Sci. U.S.A.">
        <title>SecB-like chaperone controls a toxin-antitoxin stress-responsive system in Mycobacterium tuberculosis.</title>
        <authorList>
            <person name="Bordes P."/>
            <person name="Cirinesi A.M."/>
            <person name="Ummels R."/>
            <person name="Sala A."/>
            <person name="Sakr S."/>
            <person name="Bitter W."/>
            <person name="Genevaux P."/>
        </authorList>
    </citation>
    <scope>FUNCTION AS A CHAPERONE</scope>
    <scope>SUBUNIT</scope>
    <scope>EXPRESSION IN E.COLI</scope>
    <source>
        <strain>ATCC 25618 / H37Rv</strain>
    </source>
</reference>
<feature type="initiator methionine" description="Removed" evidence="6">
    <location>
        <position position="1"/>
    </location>
</feature>
<feature type="chain" id="PRO_0000407372" description="SecB-like chaperone Rv1957">
    <location>
        <begin position="2"/>
        <end position="181"/>
    </location>
</feature>
<feature type="modified residue" description="N-acetylthreonine" evidence="6">
    <location>
        <position position="2"/>
    </location>
</feature>
<feature type="helix" evidence="7">
    <location>
        <begin position="17"/>
        <end position="22"/>
    </location>
</feature>
<feature type="strand" evidence="7">
    <location>
        <begin position="23"/>
        <end position="37"/>
    </location>
</feature>
<feature type="turn" evidence="7">
    <location>
        <begin position="43"/>
        <end position="45"/>
    </location>
</feature>
<feature type="strand" evidence="7">
    <location>
        <begin position="47"/>
        <end position="59"/>
    </location>
</feature>
<feature type="turn" evidence="7">
    <location>
        <begin position="61"/>
        <end position="63"/>
    </location>
</feature>
<feature type="strand" evidence="7">
    <location>
        <begin position="65"/>
        <end position="79"/>
    </location>
</feature>
<feature type="strand" evidence="7">
    <location>
        <begin position="96"/>
        <end position="111"/>
    </location>
</feature>
<feature type="helix" evidence="7">
    <location>
        <begin position="122"/>
        <end position="151"/>
    </location>
</feature>
<accession>P95257</accession>
<accession>L0TAX4</accession>
<evidence type="ECO:0000269" key="1">
    <source>
    </source>
</evidence>
<evidence type="ECO:0000269" key="2">
    <source>
    </source>
</evidence>
<evidence type="ECO:0000269" key="3">
    <source>
    </source>
</evidence>
<evidence type="ECO:0000269" key="4">
    <source>
    </source>
</evidence>
<evidence type="ECO:0000305" key="5"/>
<evidence type="ECO:0007744" key="6">
    <source>
    </source>
</evidence>
<evidence type="ECO:0007829" key="7">
    <source>
        <dbReference type="PDB" id="5MTW"/>
    </source>
</evidence>
<comment type="function">
    <text evidence="4">Chaperone component of an atypical, type II toxin-antitoxin chaperone (TAC) system. Prevents antitoxin HigA1 aggregation in vitro at a 1:3 chaperone:antitoxin ratio, probably also protects antitoxin HigA1 from protease. Required for neutralization of toxin HigB1 upon ectopic expression in Mycobacterium marinum or E.coli. When expressed in E.coli complements a secB deletion, restores export of OmpA and MBP and inhibits aggregation of proOmpC although it is less efficient than endogenous SecB. Complements the general chaperone function of E.coli SecB less well.</text>
</comment>
<comment type="subunit">
    <text evidence="4">Homotetramer, interacts with antitoxin HigA1.</text>
</comment>
<comment type="induction">
    <text evidence="2 3">Probably induced by the DNA damaging agent mitomycin C. Part of the Rv1954A-higB1-higA1-Rv1957 operon, as well as the higB1-higA1-Rv1957 operon, which is probably the mitomycin-induced operon; the former but not latter operon is autorepressed by HigA1 (PubMed:20585061).</text>
</comment>
<comment type="disruption phenotype">
    <text evidence="1 2">Disruption results in slow growth. A triple higB1-higA1-Rv1957 disruption mutant has no visible phenotype.</text>
</comment>
<comment type="similarity">
    <text evidence="5">Belongs to the SecB-like family.</text>
</comment>
<keyword id="KW-0002">3D-structure</keyword>
<keyword id="KW-0007">Acetylation</keyword>
<keyword id="KW-0143">Chaperone</keyword>
<keyword id="KW-1185">Reference proteome</keyword>
<sequence>MTDRTDADDLDLQRVGARLAARAQIRDIRLLRTQAAVHRAPKPAQGLTYDLEFEPAVDADPATISAFVVRISCHLRIQNQAADDDVKEGDTKDETQDVATADFEFAALFDYHLQEGEDDPTEEELTAYAATTGRFALYPYIREYVYDLTGRLALPPLTLEILSRPMPVSPGAQWPATRGTP</sequence>
<name>SECBL_MYCTU</name>
<proteinExistence type="evidence at protein level"/>
<gene>
    <name type="primary">secBL</name>
    <name type="ordered locus">Rv1957</name>
</gene>
<protein>
    <recommendedName>
        <fullName>SecB-like chaperone Rv1957</fullName>
    </recommendedName>
</protein>